<accession>P56875</accession>
<comment type="function">
    <text evidence="1">Forms part of the ribosomal stalk which helps the ribosome interact with GTP-bound translation factors. Is thus essential for accurate translation.</text>
</comment>
<comment type="subunit">
    <text evidence="1">Homodimer. Part of the ribosomal stalk of the 50S ribosomal subunit. Forms a multimeric L10(L12)X complex, where L10 forms an elongated spine to which 2 to 4 L12 dimers bind in a sequential fashion. Binds GTP-bound translation factors.</text>
</comment>
<comment type="similarity">
    <text evidence="1">Belongs to the bacterial ribosomal protein bL12 family.</text>
</comment>
<organism>
    <name type="scientific">Helicobacter pylori (strain J99 / ATCC 700824)</name>
    <name type="common">Campylobacter pylori J99</name>
    <dbReference type="NCBI Taxonomy" id="85963"/>
    <lineage>
        <taxon>Bacteria</taxon>
        <taxon>Pseudomonadati</taxon>
        <taxon>Campylobacterota</taxon>
        <taxon>Epsilonproteobacteria</taxon>
        <taxon>Campylobacterales</taxon>
        <taxon>Helicobacteraceae</taxon>
        <taxon>Helicobacter</taxon>
    </lineage>
</organism>
<reference key="1">
    <citation type="journal article" date="1999" name="Nature">
        <title>Genomic sequence comparison of two unrelated isolates of the human gastric pathogen Helicobacter pylori.</title>
        <authorList>
            <person name="Alm R.A."/>
            <person name="Ling L.-S.L."/>
            <person name="Moir D.T."/>
            <person name="King B.L."/>
            <person name="Brown E.D."/>
            <person name="Doig P.C."/>
            <person name="Smith D.R."/>
            <person name="Noonan B."/>
            <person name="Guild B.C."/>
            <person name="deJonge B.L."/>
            <person name="Carmel G."/>
            <person name="Tummino P.J."/>
            <person name="Caruso A."/>
            <person name="Uria-Nickelsen M."/>
            <person name="Mills D.M."/>
            <person name="Ives C."/>
            <person name="Gibson R."/>
            <person name="Merberg D."/>
            <person name="Mills S.D."/>
            <person name="Jiang Q."/>
            <person name="Taylor D.E."/>
            <person name="Vovis G.F."/>
            <person name="Trust T.J."/>
        </authorList>
    </citation>
    <scope>NUCLEOTIDE SEQUENCE [LARGE SCALE GENOMIC DNA]</scope>
    <source>
        <strain>J99 / ATCC 700824</strain>
    </source>
</reference>
<reference key="2">
    <citation type="journal article" date="1999" name="Infect. Immun.">
        <title>Isolation of recombinant protective Helicobacter pylori antigens.</title>
        <authorList>
            <person name="Hocking D."/>
            <person name="Webb E."/>
            <person name="Radcliff F."/>
            <person name="Rothel L."/>
            <person name="Taylor S."/>
            <person name="Pinczower G."/>
            <person name="Kapouleas C."/>
            <person name="Braley H."/>
            <person name="Lee A."/>
            <person name="Doidge C."/>
        </authorList>
    </citation>
    <scope>NUCLEOTIDE SEQUENCE [GENOMIC DNA]</scope>
    <source>
        <strain>HP921023</strain>
    </source>
</reference>
<gene>
    <name evidence="1" type="primary">rplL</name>
    <name type="ordered locus">jhp_1122</name>
</gene>
<feature type="chain" id="PRO_0000157537" description="Large ribosomal subunit protein bL12">
    <location>
        <begin position="1"/>
        <end position="125"/>
    </location>
</feature>
<sequence>MAISKEEVLEYIGSLSVLELSELVKMFEEKFGVSATPTVVAGAAVAGGAAAESEEKTEFNVILADSGAEKIKVIKVVREITGLGLKEAKDATEKTPHVLKEGVNKEEAETIKKKLEEVGAKVEVK</sequence>
<name>RL7_HELPJ</name>
<dbReference type="EMBL" id="AE001439">
    <property type="protein sequence ID" value="AAD06700.1"/>
    <property type="molecule type" value="Genomic_DNA"/>
</dbReference>
<dbReference type="EMBL" id="U86609">
    <property type="protein sequence ID" value="AAB47278.1"/>
    <property type="molecule type" value="Genomic_DNA"/>
</dbReference>
<dbReference type="PIR" id="C71846">
    <property type="entry name" value="C71846"/>
</dbReference>
<dbReference type="RefSeq" id="WP_001018228.1">
    <property type="nucleotide sequence ID" value="NZ_CP011330.1"/>
</dbReference>
<dbReference type="SMR" id="P56875"/>
<dbReference type="GeneID" id="93237673"/>
<dbReference type="KEGG" id="hpj:jhp_1122"/>
<dbReference type="PATRIC" id="fig|85963.30.peg.1455"/>
<dbReference type="eggNOG" id="COG0222">
    <property type="taxonomic scope" value="Bacteria"/>
</dbReference>
<dbReference type="Proteomes" id="UP000000804">
    <property type="component" value="Chromosome"/>
</dbReference>
<dbReference type="GO" id="GO:0022625">
    <property type="term" value="C:cytosolic large ribosomal subunit"/>
    <property type="evidence" value="ECO:0007669"/>
    <property type="project" value="TreeGrafter"/>
</dbReference>
<dbReference type="GO" id="GO:0003729">
    <property type="term" value="F:mRNA binding"/>
    <property type="evidence" value="ECO:0007669"/>
    <property type="project" value="TreeGrafter"/>
</dbReference>
<dbReference type="GO" id="GO:0003735">
    <property type="term" value="F:structural constituent of ribosome"/>
    <property type="evidence" value="ECO:0007669"/>
    <property type="project" value="InterPro"/>
</dbReference>
<dbReference type="GO" id="GO:0006412">
    <property type="term" value="P:translation"/>
    <property type="evidence" value="ECO:0007669"/>
    <property type="project" value="UniProtKB-UniRule"/>
</dbReference>
<dbReference type="CDD" id="cd00387">
    <property type="entry name" value="Ribosomal_L7_L12"/>
    <property type="match status" value="1"/>
</dbReference>
<dbReference type="FunFam" id="1.20.5.710:FF:000004">
    <property type="entry name" value="50S ribosomal protein L7/L12"/>
    <property type="match status" value="1"/>
</dbReference>
<dbReference type="FunFam" id="3.30.1390.10:FF:000001">
    <property type="entry name" value="50S ribosomal protein L7/L12"/>
    <property type="match status" value="1"/>
</dbReference>
<dbReference type="Gene3D" id="3.30.1390.10">
    <property type="match status" value="1"/>
</dbReference>
<dbReference type="Gene3D" id="1.20.5.710">
    <property type="entry name" value="Single helix bin"/>
    <property type="match status" value="1"/>
</dbReference>
<dbReference type="HAMAP" id="MF_00368">
    <property type="entry name" value="Ribosomal_bL12"/>
    <property type="match status" value="1"/>
</dbReference>
<dbReference type="InterPro" id="IPR000206">
    <property type="entry name" value="Ribosomal_bL12"/>
</dbReference>
<dbReference type="InterPro" id="IPR013823">
    <property type="entry name" value="Ribosomal_bL12_C"/>
</dbReference>
<dbReference type="InterPro" id="IPR014719">
    <property type="entry name" value="Ribosomal_bL12_C/ClpS-like"/>
</dbReference>
<dbReference type="InterPro" id="IPR008932">
    <property type="entry name" value="Ribosomal_bL12_oligo"/>
</dbReference>
<dbReference type="InterPro" id="IPR036235">
    <property type="entry name" value="Ribosomal_bL12_oligo_N_sf"/>
</dbReference>
<dbReference type="NCBIfam" id="TIGR00855">
    <property type="entry name" value="L12"/>
    <property type="match status" value="1"/>
</dbReference>
<dbReference type="PANTHER" id="PTHR45987">
    <property type="entry name" value="39S RIBOSOMAL PROTEIN L12"/>
    <property type="match status" value="1"/>
</dbReference>
<dbReference type="PANTHER" id="PTHR45987:SF4">
    <property type="entry name" value="LARGE RIBOSOMAL SUBUNIT PROTEIN BL12M"/>
    <property type="match status" value="1"/>
</dbReference>
<dbReference type="Pfam" id="PF00542">
    <property type="entry name" value="Ribosomal_L12"/>
    <property type="match status" value="1"/>
</dbReference>
<dbReference type="Pfam" id="PF16320">
    <property type="entry name" value="Ribosomal_L12_N"/>
    <property type="match status" value="1"/>
</dbReference>
<dbReference type="SUPFAM" id="SSF54736">
    <property type="entry name" value="ClpS-like"/>
    <property type="match status" value="1"/>
</dbReference>
<dbReference type="SUPFAM" id="SSF48300">
    <property type="entry name" value="Ribosomal protein L7/12, oligomerisation (N-terminal) domain"/>
    <property type="match status" value="1"/>
</dbReference>
<proteinExistence type="inferred from homology"/>
<evidence type="ECO:0000255" key="1">
    <source>
        <dbReference type="HAMAP-Rule" id="MF_00368"/>
    </source>
</evidence>
<evidence type="ECO:0000305" key="2"/>
<keyword id="KW-0687">Ribonucleoprotein</keyword>
<keyword id="KW-0689">Ribosomal protein</keyword>
<protein>
    <recommendedName>
        <fullName evidence="1">Large ribosomal subunit protein bL12</fullName>
    </recommendedName>
    <alternativeName>
        <fullName evidence="2">50S ribosomal protein L7/L12</fullName>
    </alternativeName>
</protein>